<feature type="chain" id="PRO_1000055452" description="Large ribosomal subunit protein uL13">
    <location>
        <begin position="1"/>
        <end position="143"/>
    </location>
</feature>
<evidence type="ECO:0000255" key="1">
    <source>
        <dbReference type="HAMAP-Rule" id="MF_01366"/>
    </source>
</evidence>
<evidence type="ECO:0000305" key="2"/>
<accession>Q220T2</accession>
<proteinExistence type="inferred from homology"/>
<name>RL13_ALBFT</name>
<reference key="1">
    <citation type="submission" date="2006-02" db="EMBL/GenBank/DDBJ databases">
        <title>Complete sequence of chromosome of Rhodoferax ferrireducens DSM 15236.</title>
        <authorList>
            <person name="Copeland A."/>
            <person name="Lucas S."/>
            <person name="Lapidus A."/>
            <person name="Barry K."/>
            <person name="Detter J.C."/>
            <person name="Glavina del Rio T."/>
            <person name="Hammon N."/>
            <person name="Israni S."/>
            <person name="Pitluck S."/>
            <person name="Brettin T."/>
            <person name="Bruce D."/>
            <person name="Han C."/>
            <person name="Tapia R."/>
            <person name="Gilna P."/>
            <person name="Kiss H."/>
            <person name="Schmutz J."/>
            <person name="Larimer F."/>
            <person name="Land M."/>
            <person name="Kyrpides N."/>
            <person name="Ivanova N."/>
            <person name="Richardson P."/>
        </authorList>
    </citation>
    <scope>NUCLEOTIDE SEQUENCE [LARGE SCALE GENOMIC DNA]</scope>
    <source>
        <strain>ATCC BAA-621 / DSM 15236 / T118</strain>
    </source>
</reference>
<gene>
    <name evidence="1" type="primary">rplM</name>
    <name type="ordered locus">Rfer_0721</name>
</gene>
<comment type="function">
    <text evidence="1">This protein is one of the early assembly proteins of the 50S ribosomal subunit, although it is not seen to bind rRNA by itself. It is important during the early stages of 50S assembly.</text>
</comment>
<comment type="subunit">
    <text evidence="1">Part of the 50S ribosomal subunit.</text>
</comment>
<comment type="similarity">
    <text evidence="1">Belongs to the universal ribosomal protein uL13 family.</text>
</comment>
<organism>
    <name type="scientific">Albidiferax ferrireducens (strain ATCC BAA-621 / DSM 15236 / T118)</name>
    <name type="common">Rhodoferax ferrireducens</name>
    <dbReference type="NCBI Taxonomy" id="338969"/>
    <lineage>
        <taxon>Bacteria</taxon>
        <taxon>Pseudomonadati</taxon>
        <taxon>Pseudomonadota</taxon>
        <taxon>Betaproteobacteria</taxon>
        <taxon>Burkholderiales</taxon>
        <taxon>Comamonadaceae</taxon>
        <taxon>Rhodoferax</taxon>
    </lineage>
</organism>
<protein>
    <recommendedName>
        <fullName evidence="1">Large ribosomal subunit protein uL13</fullName>
    </recommendedName>
    <alternativeName>
        <fullName evidence="2">50S ribosomal protein L13</fullName>
    </alternativeName>
</protein>
<keyword id="KW-1185">Reference proteome</keyword>
<keyword id="KW-0687">Ribonucleoprotein</keyword>
<keyword id="KW-0689">Ribosomal protein</keyword>
<sequence length="143" mass="15621">MTKTFSAKAADVVHEWFVIDATDKVLGRVASEVALRLRGKHKAIYTPHVDTGDFIVIINAAQLRVTGAKSTDKIYYSHSGYPGGISSVNFRDMQAKFPGRALEKAVKGMLPKGPLGYAMIKKLKVYGGAEHPHTAQQPKVLEL</sequence>
<dbReference type="EMBL" id="CP000267">
    <property type="protein sequence ID" value="ABD68471.1"/>
    <property type="molecule type" value="Genomic_DNA"/>
</dbReference>
<dbReference type="RefSeq" id="WP_011463044.1">
    <property type="nucleotide sequence ID" value="NC_007908.1"/>
</dbReference>
<dbReference type="SMR" id="Q220T2"/>
<dbReference type="STRING" id="338969.Rfer_0721"/>
<dbReference type="KEGG" id="rfr:Rfer_0721"/>
<dbReference type="eggNOG" id="COG0102">
    <property type="taxonomic scope" value="Bacteria"/>
</dbReference>
<dbReference type="HOGENOM" id="CLU_082184_2_2_4"/>
<dbReference type="OrthoDB" id="9801330at2"/>
<dbReference type="Proteomes" id="UP000008332">
    <property type="component" value="Chromosome"/>
</dbReference>
<dbReference type="GO" id="GO:0022625">
    <property type="term" value="C:cytosolic large ribosomal subunit"/>
    <property type="evidence" value="ECO:0007669"/>
    <property type="project" value="TreeGrafter"/>
</dbReference>
<dbReference type="GO" id="GO:0003729">
    <property type="term" value="F:mRNA binding"/>
    <property type="evidence" value="ECO:0007669"/>
    <property type="project" value="TreeGrafter"/>
</dbReference>
<dbReference type="GO" id="GO:0003735">
    <property type="term" value="F:structural constituent of ribosome"/>
    <property type="evidence" value="ECO:0007669"/>
    <property type="project" value="InterPro"/>
</dbReference>
<dbReference type="GO" id="GO:0017148">
    <property type="term" value="P:negative regulation of translation"/>
    <property type="evidence" value="ECO:0007669"/>
    <property type="project" value="TreeGrafter"/>
</dbReference>
<dbReference type="GO" id="GO:0006412">
    <property type="term" value="P:translation"/>
    <property type="evidence" value="ECO:0007669"/>
    <property type="project" value="UniProtKB-UniRule"/>
</dbReference>
<dbReference type="CDD" id="cd00392">
    <property type="entry name" value="Ribosomal_L13"/>
    <property type="match status" value="1"/>
</dbReference>
<dbReference type="FunFam" id="3.90.1180.10:FF:000001">
    <property type="entry name" value="50S ribosomal protein L13"/>
    <property type="match status" value="1"/>
</dbReference>
<dbReference type="Gene3D" id="3.90.1180.10">
    <property type="entry name" value="Ribosomal protein L13"/>
    <property type="match status" value="1"/>
</dbReference>
<dbReference type="HAMAP" id="MF_01366">
    <property type="entry name" value="Ribosomal_uL13"/>
    <property type="match status" value="1"/>
</dbReference>
<dbReference type="InterPro" id="IPR005822">
    <property type="entry name" value="Ribosomal_uL13"/>
</dbReference>
<dbReference type="InterPro" id="IPR005823">
    <property type="entry name" value="Ribosomal_uL13_bac-type"/>
</dbReference>
<dbReference type="InterPro" id="IPR036899">
    <property type="entry name" value="Ribosomal_uL13_sf"/>
</dbReference>
<dbReference type="NCBIfam" id="TIGR01066">
    <property type="entry name" value="rplM_bact"/>
    <property type="match status" value="1"/>
</dbReference>
<dbReference type="PANTHER" id="PTHR11545:SF2">
    <property type="entry name" value="LARGE RIBOSOMAL SUBUNIT PROTEIN UL13M"/>
    <property type="match status" value="1"/>
</dbReference>
<dbReference type="PANTHER" id="PTHR11545">
    <property type="entry name" value="RIBOSOMAL PROTEIN L13"/>
    <property type="match status" value="1"/>
</dbReference>
<dbReference type="Pfam" id="PF00572">
    <property type="entry name" value="Ribosomal_L13"/>
    <property type="match status" value="1"/>
</dbReference>
<dbReference type="PIRSF" id="PIRSF002181">
    <property type="entry name" value="Ribosomal_L13"/>
    <property type="match status" value="1"/>
</dbReference>
<dbReference type="SUPFAM" id="SSF52161">
    <property type="entry name" value="Ribosomal protein L13"/>
    <property type="match status" value="1"/>
</dbReference>